<protein>
    <recommendedName>
        <fullName>Guanine nucleotide exchange factor SDC25</fullName>
    </recommendedName>
</protein>
<name>SDC25_YEAS1</name>
<dbReference type="EMBL" id="CH408054">
    <property type="protein sequence ID" value="EDV09296.1"/>
    <property type="molecule type" value="Genomic_DNA"/>
</dbReference>
<dbReference type="SMR" id="B3LTF3"/>
<dbReference type="HOGENOM" id="CLU_002171_0_0_1"/>
<dbReference type="OrthoDB" id="17350at4893"/>
<dbReference type="Proteomes" id="UP000008335">
    <property type="component" value="Unassembled WGS sequence"/>
</dbReference>
<dbReference type="GO" id="GO:0005886">
    <property type="term" value="C:plasma membrane"/>
    <property type="evidence" value="ECO:0007669"/>
    <property type="project" value="TreeGrafter"/>
</dbReference>
<dbReference type="GO" id="GO:0005085">
    <property type="term" value="F:guanyl-nucleotide exchange factor activity"/>
    <property type="evidence" value="ECO:0007669"/>
    <property type="project" value="UniProtKB-KW"/>
</dbReference>
<dbReference type="GO" id="GO:0051301">
    <property type="term" value="P:cell division"/>
    <property type="evidence" value="ECO:0007669"/>
    <property type="project" value="UniProtKB-KW"/>
</dbReference>
<dbReference type="GO" id="GO:0007265">
    <property type="term" value="P:Ras protein signal transduction"/>
    <property type="evidence" value="ECO:0007669"/>
    <property type="project" value="TreeGrafter"/>
</dbReference>
<dbReference type="CDD" id="cd00155">
    <property type="entry name" value="RasGEF"/>
    <property type="match status" value="1"/>
</dbReference>
<dbReference type="CDD" id="cd06224">
    <property type="entry name" value="REM"/>
    <property type="match status" value="1"/>
</dbReference>
<dbReference type="CDD" id="cd11883">
    <property type="entry name" value="SH3_Sdc25"/>
    <property type="match status" value="1"/>
</dbReference>
<dbReference type="Gene3D" id="1.10.840.10">
    <property type="entry name" value="Ras guanine-nucleotide exchange factors catalytic domain"/>
    <property type="match status" value="1"/>
</dbReference>
<dbReference type="Gene3D" id="2.30.30.40">
    <property type="entry name" value="SH3 Domains"/>
    <property type="match status" value="1"/>
</dbReference>
<dbReference type="Gene3D" id="1.20.870.10">
    <property type="entry name" value="Son of sevenless (SoS) protein Chain: S domain 1"/>
    <property type="match status" value="1"/>
</dbReference>
<dbReference type="InterPro" id="IPR008937">
    <property type="entry name" value="Ras-like_GEF"/>
</dbReference>
<dbReference type="InterPro" id="IPR000651">
    <property type="entry name" value="Ras-like_Gua-exchang_fac_N"/>
</dbReference>
<dbReference type="InterPro" id="IPR019804">
    <property type="entry name" value="Ras_G-nucl-exch_fac_CS"/>
</dbReference>
<dbReference type="InterPro" id="IPR023578">
    <property type="entry name" value="Ras_GEF_dom_sf"/>
</dbReference>
<dbReference type="InterPro" id="IPR001895">
    <property type="entry name" value="RASGEF_cat_dom"/>
</dbReference>
<dbReference type="InterPro" id="IPR036964">
    <property type="entry name" value="RASGEF_cat_dom_sf"/>
</dbReference>
<dbReference type="InterPro" id="IPR036028">
    <property type="entry name" value="SH3-like_dom_sf"/>
</dbReference>
<dbReference type="InterPro" id="IPR001452">
    <property type="entry name" value="SH3_domain"/>
</dbReference>
<dbReference type="PANTHER" id="PTHR23113:SF368">
    <property type="entry name" value="CELL DIVISION CONTROL PROTEIN 25"/>
    <property type="match status" value="1"/>
</dbReference>
<dbReference type="PANTHER" id="PTHR23113">
    <property type="entry name" value="GUANINE NUCLEOTIDE EXCHANGE FACTOR"/>
    <property type="match status" value="1"/>
</dbReference>
<dbReference type="Pfam" id="PF00617">
    <property type="entry name" value="RasGEF"/>
    <property type="match status" value="1"/>
</dbReference>
<dbReference type="Pfam" id="PF00618">
    <property type="entry name" value="RasGEF_N"/>
    <property type="match status" value="1"/>
</dbReference>
<dbReference type="SMART" id="SM00147">
    <property type="entry name" value="RasGEF"/>
    <property type="match status" value="1"/>
</dbReference>
<dbReference type="SMART" id="SM00229">
    <property type="entry name" value="RasGEFN"/>
    <property type="match status" value="1"/>
</dbReference>
<dbReference type="SMART" id="SM00326">
    <property type="entry name" value="SH3"/>
    <property type="match status" value="1"/>
</dbReference>
<dbReference type="SUPFAM" id="SSF48366">
    <property type="entry name" value="Ras GEF"/>
    <property type="match status" value="1"/>
</dbReference>
<dbReference type="SUPFAM" id="SSF50044">
    <property type="entry name" value="SH3-domain"/>
    <property type="match status" value="1"/>
</dbReference>
<dbReference type="PROSITE" id="PS00720">
    <property type="entry name" value="RASGEF"/>
    <property type="match status" value="1"/>
</dbReference>
<dbReference type="PROSITE" id="PS50009">
    <property type="entry name" value="RASGEF_CAT"/>
    <property type="match status" value="1"/>
</dbReference>
<dbReference type="PROSITE" id="PS50212">
    <property type="entry name" value="RASGEF_NTER"/>
    <property type="match status" value="1"/>
</dbReference>
<dbReference type="PROSITE" id="PS50002">
    <property type="entry name" value="SH3"/>
    <property type="match status" value="1"/>
</dbReference>
<feature type="chain" id="PRO_0000393437" description="Guanine nucleotide exchange factor SDC25">
    <location>
        <begin position="1"/>
        <end position="1252"/>
    </location>
</feature>
<feature type="domain" description="SH3" evidence="4">
    <location>
        <begin position="26"/>
        <end position="97"/>
    </location>
</feature>
<feature type="domain" description="N-terminal Ras-GEF" evidence="2">
    <location>
        <begin position="782"/>
        <end position="914"/>
    </location>
</feature>
<feature type="domain" description="Ras-GEF" evidence="3">
    <location>
        <begin position="952"/>
        <end position="1199"/>
    </location>
</feature>
<feature type="region of interest" description="Disordered" evidence="5">
    <location>
        <begin position="409"/>
        <end position="454"/>
    </location>
</feature>
<feature type="region of interest" description="Disordered" evidence="5">
    <location>
        <begin position="623"/>
        <end position="648"/>
    </location>
</feature>
<feature type="region of interest" description="Disordered" evidence="5">
    <location>
        <begin position="1201"/>
        <end position="1252"/>
    </location>
</feature>
<feature type="compositionally biased region" description="Low complexity" evidence="5">
    <location>
        <begin position="416"/>
        <end position="428"/>
    </location>
</feature>
<feature type="compositionally biased region" description="Basic and acidic residues" evidence="5">
    <location>
        <begin position="1214"/>
        <end position="1236"/>
    </location>
</feature>
<feature type="compositionally biased region" description="Basic residues" evidence="5">
    <location>
        <begin position="1239"/>
        <end position="1252"/>
    </location>
</feature>
<sequence>MSRTASYAGMTTPVKDKEGHGIPCLQPIDVVECTYQYFTKSQNKLSLRVGDLIYVLTKGSNGWWDGVLIRHSANNNNNSLILDRGWFPPSFTRSILNELHGVPEIGNELEIFQAGLNLKLELSSNPVILSLEDFLDCCRDIEFKEQLAWSPIPVHERKGCCELLYYNQDLDVYCRTLPYLPQNQVETVNDYSSFPAISKIAGKKMPITSSPDLFYLNDCDVVYWYDLTRLVCHYVNLTERDLLANEREKFLTSLDLLTAQITCVYMLFRNLRLVEDSFKKTLKKLIYTLSRFSINANIWFHSTPFEEREAIASQKDPERRSPLLQSILGTFQKFHFLLRLLHFLSNPNELTILPQLTPRFFKDSFNTISWNNPFLRKHLNQHMSHDLPRQMIKAVAGASGIVAENNDEIPASKQGTSCSSETSHHSPSAPFQRRRRGTIFSNVPGSSDESDTIWSKRKKPYPLNEETLSLVRARKEQLDAKLKQMIKSANEYLSNTANFSKMLNFEMNFKTYEEVSGTIPIIDILENLDLTIYLNLRELGDENRVFDEDVAIDDEDKEFLKHSLSSLSYILSDYFNMKQYFHDVVVKFIIVAQHLTLEDPFVFSPMQNDLPTGYYEPMKPSSLNLDNAKDKKNGSQNTDIQEEEDEYEPDPDSLILFHNLINQDSDFNDLKFFNLAHVFKKSCDDYFDVLKLSIEFVNRLILERENLLNYAARMMKNNITELLLRGEEGYGSYDGGETAEKSDTNAVYADSDTKDNDEWRDSQVKLPRYLQREYDSELIWGSNNRIKGGSKHALISYLTDNEKKDLFFNITFLITFRSIFTTTEFLSYLISQYNLDPPEDLCFEEYNEWVTKKLIPVKCRVVEIMTTFFKQYWFPGYDEPDLATLNLDYFAQVAIKENITGSVELLKEVNQKFKHGNMQEATAPMKTLDQQICQEHYWGTLYSTTESILAVDPVLFATQLTILEHEIYCEITIFDCLQKIWKNKYTKSYGASPGLNEFISFANKLTNFISYSIVKEADKSKRAKLLSHFIFIAEYCRKFNNFSSMTAIISALYSSSIYRLEKTWQAVIPQTRDLLQSLDKLMDPKKNFINYRSELKSLHSAPCVPFFGVYLSDLTFTDSGNPDYLVLEHGLKGVHDEKKYINFNKRSRLVDILQEIIYFKKTHYDFTKDRTVIECISNSLENIPHIEKQYQLSLIIEPKPRKKVVPNSNSNNKSQEKSRDDQTDEGKTSTKKDRFSKFQLHKTKKKAPKVSK</sequence>
<evidence type="ECO:0000250" key="1"/>
<evidence type="ECO:0000255" key="2">
    <source>
        <dbReference type="PROSITE-ProRule" id="PRU00135"/>
    </source>
</evidence>
<evidence type="ECO:0000255" key="3">
    <source>
        <dbReference type="PROSITE-ProRule" id="PRU00168"/>
    </source>
</evidence>
<evidence type="ECO:0000255" key="4">
    <source>
        <dbReference type="PROSITE-ProRule" id="PRU00192"/>
    </source>
</evidence>
<evidence type="ECO:0000256" key="5">
    <source>
        <dbReference type="SAM" id="MobiDB-lite"/>
    </source>
</evidence>
<comment type="function">
    <text evidence="1">Promotes the exchange of Ras-bound GDP by GTP.</text>
</comment>
<comment type="miscellaneous">
    <text>Suppresses the CDC25-5 mutation in yeast (restores cAMP level) and has similar functions as CDC25.</text>
</comment>
<accession>B3LTF3</accession>
<proteinExistence type="inferred from homology"/>
<gene>
    <name type="primary">SDC25</name>
    <name type="synonym">SCD25</name>
    <name type="ORF">SCRG_04972</name>
</gene>
<organism>
    <name type="scientific">Saccharomyces cerevisiae (strain RM11-1a)</name>
    <name type="common">Baker's yeast</name>
    <dbReference type="NCBI Taxonomy" id="285006"/>
    <lineage>
        <taxon>Eukaryota</taxon>
        <taxon>Fungi</taxon>
        <taxon>Dikarya</taxon>
        <taxon>Ascomycota</taxon>
        <taxon>Saccharomycotina</taxon>
        <taxon>Saccharomycetes</taxon>
        <taxon>Saccharomycetales</taxon>
        <taxon>Saccharomycetaceae</taxon>
        <taxon>Saccharomyces</taxon>
    </lineage>
</organism>
<keyword id="KW-0131">Cell cycle</keyword>
<keyword id="KW-0132">Cell division</keyword>
<keyword id="KW-0344">Guanine-nucleotide releasing factor</keyword>
<keyword id="KW-0728">SH3 domain</keyword>
<reference key="1">
    <citation type="submission" date="2005-03" db="EMBL/GenBank/DDBJ databases">
        <title>Annotation of the Saccharomyces cerevisiae RM11-1a genome.</title>
        <authorList>
            <consortium name="The Broad Institute Genome Sequencing Platform"/>
            <person name="Birren B.W."/>
            <person name="Lander E.S."/>
            <person name="Galagan J.E."/>
            <person name="Nusbaum C."/>
            <person name="Devon K."/>
            <person name="Cuomo C."/>
            <person name="Jaffe D.B."/>
            <person name="Butler J."/>
            <person name="Alvarez P."/>
            <person name="Gnerre S."/>
            <person name="Grabherr M."/>
            <person name="Kleber M."/>
            <person name="Mauceli E.W."/>
            <person name="Brockman W."/>
            <person name="MacCallum I.A."/>
            <person name="Rounsley S."/>
            <person name="Young S.K."/>
            <person name="LaButti K."/>
            <person name="Pushparaj V."/>
            <person name="DeCaprio D."/>
            <person name="Crawford M."/>
            <person name="Koehrsen M."/>
            <person name="Engels R."/>
            <person name="Montgomery P."/>
            <person name="Pearson M."/>
            <person name="Howarth C."/>
            <person name="Larson L."/>
            <person name="Luoma S."/>
            <person name="White J."/>
            <person name="O'Leary S."/>
            <person name="Kodira C.D."/>
            <person name="Zeng Q."/>
            <person name="Yandava C."/>
            <person name="Alvarado L."/>
            <person name="Pratt S."/>
            <person name="Kruglyak L."/>
        </authorList>
    </citation>
    <scope>NUCLEOTIDE SEQUENCE [LARGE SCALE GENOMIC DNA]</scope>
    <source>
        <strain>RM11-1a</strain>
    </source>
</reference>